<comment type="function">
    <text evidence="1">RNA-directed RNA polymerase that catalyzes the transcription of viral mRNAs, their capping and polyadenylation. The template is composed of the viral RNA tightly encapsidated by the nucleoprotein (N). The viral polymerase binds to the genomic RNA at the 3' leader promoter, and transcribes subsequently all viral mRNAs with a decreasing efficiency. The first gene is the most transcribed, and the last the least transcribed. The viral phosphoprotein acts as a processivity factor. Capping is concomitant with initiation of mRNA transcription. Indeed, a GDP polyribonucleotidyl transferase (PRNTase) adds the cap structure when the nascent RNA chain length has reached few nucleotides. Ribose 2'-O methylation of viral mRNA cap precedes and facilitates subsequent guanine-N-7 methylation, both activities being carried by the viral polymerase. Polyadenylation of mRNAs occur by a stuttering mechanism at a slipery stop site present at the end viral genes. After finishing transcription of a mRNA, the polymerase can resume transcription of the downstream gene.</text>
</comment>
<comment type="function">
    <text evidence="1">RNA-directed RNA polymerase that catalyzes the replication of viral genomic RNA. The template is composed of the viral RNA tightly encapsidated by the nucleoprotein (N). The replicase mode is dependent on intracellular N protein concentration. In this mode, the polymerase replicates the whole viral genome without recognizing transcriptional signals, and the replicated genome is not caped or polyadenylated.</text>
</comment>
<comment type="catalytic activity">
    <reaction evidence="3">
        <text>RNA(n) + a ribonucleoside 5'-triphosphate = RNA(n+1) + diphosphate</text>
        <dbReference type="Rhea" id="RHEA:21248"/>
        <dbReference type="Rhea" id="RHEA-COMP:14527"/>
        <dbReference type="Rhea" id="RHEA-COMP:17342"/>
        <dbReference type="ChEBI" id="CHEBI:33019"/>
        <dbReference type="ChEBI" id="CHEBI:61557"/>
        <dbReference type="ChEBI" id="CHEBI:140395"/>
        <dbReference type="EC" id="2.7.7.48"/>
    </reaction>
</comment>
<comment type="catalytic activity">
    <reaction evidence="1">
        <text>a 5'-end (5'-triphosphoguanosine)-adenylyl-adenylyl-cytidylyl-adenosine in mRNA + 2 S-adenosyl-L-methionine = a 5'-end (N(7)-methyl 5'-triphosphoguanosine)-(2'-O-methyladenylyl)-adenylyl-cytidylyl-adenosine in mRNA + 2 S-adenosyl-L-homocysteine + H(+)</text>
        <dbReference type="Rhea" id="RHEA:65376"/>
        <dbReference type="Rhea" id="RHEA-COMP:16797"/>
        <dbReference type="Rhea" id="RHEA-COMP:16798"/>
        <dbReference type="ChEBI" id="CHEBI:15378"/>
        <dbReference type="ChEBI" id="CHEBI:57856"/>
        <dbReference type="ChEBI" id="CHEBI:59789"/>
        <dbReference type="ChEBI" id="CHEBI:156483"/>
        <dbReference type="ChEBI" id="CHEBI:156484"/>
        <dbReference type="EC" id="2.1.1.375"/>
    </reaction>
</comment>
<comment type="catalytic activity">
    <reaction evidence="1">
        <text>a 5'-end (5'-triphosphoguanosine)-adenylyl-adenylyl-cytidylyl-adenosine in mRNA + S-adenosyl-L-methionine = a 5'-end (5'-triphosphoguanosine)-(2'-O-methyladenylyl)-adenylyl-cytidylyl-adenosine in mRNA + S-adenosyl-L-homocysteine + H(+)</text>
        <dbReference type="Rhea" id="RHEA:65380"/>
        <dbReference type="Rhea" id="RHEA-COMP:16797"/>
        <dbReference type="Rhea" id="RHEA-COMP:16801"/>
        <dbReference type="ChEBI" id="CHEBI:15378"/>
        <dbReference type="ChEBI" id="CHEBI:57856"/>
        <dbReference type="ChEBI" id="CHEBI:59789"/>
        <dbReference type="ChEBI" id="CHEBI:156482"/>
        <dbReference type="ChEBI" id="CHEBI:156484"/>
    </reaction>
</comment>
<comment type="catalytic activity">
    <reaction evidence="2">
        <text>a 5'-end triphospho-adenylyl-adenylyl-cytidylyl-adenosine in mRNA + GDP + H(+) = a 5'-end (5'-triphosphoguanosine)-adenylyl-adenylyl-cytidylyl-adenosine in mRNA + diphosphate</text>
        <dbReference type="Rhea" id="RHEA:65436"/>
        <dbReference type="Rhea" id="RHEA-COMP:16797"/>
        <dbReference type="Rhea" id="RHEA-COMP:16799"/>
        <dbReference type="ChEBI" id="CHEBI:15378"/>
        <dbReference type="ChEBI" id="CHEBI:33019"/>
        <dbReference type="ChEBI" id="CHEBI:58189"/>
        <dbReference type="ChEBI" id="CHEBI:156484"/>
        <dbReference type="ChEBI" id="CHEBI:156503"/>
        <dbReference type="EC" id="2.7.7.88"/>
    </reaction>
</comment>
<comment type="catalytic activity">
    <reaction evidence="1">
        <text>a 5'-end (5'-triphosphoguanosine)-(2'-O-methyladenylyl)-adenylyl-cytidylyl-adenosine in mRNA + S-adenosyl-L-methionine = a 5'-end (N(7)-methyl 5'-triphosphoguanosine)-(2'-O-methyladenylyl)-adenylyl-cytidylyl-adenosine in mRNA + S-adenosyl-L-homocysteine</text>
        <dbReference type="Rhea" id="RHEA:65440"/>
        <dbReference type="Rhea" id="RHEA-COMP:16798"/>
        <dbReference type="Rhea" id="RHEA-COMP:16801"/>
        <dbReference type="ChEBI" id="CHEBI:57856"/>
        <dbReference type="ChEBI" id="CHEBI:59789"/>
        <dbReference type="ChEBI" id="CHEBI:156482"/>
        <dbReference type="ChEBI" id="CHEBI:156483"/>
    </reaction>
</comment>
<comment type="catalytic activity">
    <reaction evidence="2">
        <text>GTP + H2O = GDP + phosphate + H(+)</text>
        <dbReference type="Rhea" id="RHEA:19669"/>
        <dbReference type="ChEBI" id="CHEBI:15377"/>
        <dbReference type="ChEBI" id="CHEBI:15378"/>
        <dbReference type="ChEBI" id="CHEBI:37565"/>
        <dbReference type="ChEBI" id="CHEBI:43474"/>
        <dbReference type="ChEBI" id="CHEBI:58189"/>
    </reaction>
</comment>
<comment type="subunit">
    <text evidence="1">May form homodimer. Interacts with the P protein.</text>
</comment>
<comment type="subcellular location">
    <subcellularLocation>
        <location evidence="1">Virion</location>
    </subcellularLocation>
    <subcellularLocation>
        <location evidence="1">Host cytoplasm</location>
    </subcellularLocation>
    <text evidence="1">L and P are packaged asymmetrically towards the blunt end of the virus.</text>
</comment>
<comment type="similarity">
    <text evidence="4">Belongs to the rhabdoviridae protein L family.</text>
</comment>
<name>L_MMVR</name>
<gene>
    <name type="primary">L</name>
</gene>
<accession>Q6E0W6</accession>
<keyword id="KW-0067">ATP-binding</keyword>
<keyword id="KW-1035">Host cytoplasm</keyword>
<keyword id="KW-0378">Hydrolase</keyword>
<keyword id="KW-0489">Methyltransferase</keyword>
<keyword id="KW-0506">mRNA capping</keyword>
<keyword id="KW-0507">mRNA processing</keyword>
<keyword id="KW-0511">Multifunctional enzyme</keyword>
<keyword id="KW-0547">Nucleotide-binding</keyword>
<keyword id="KW-0548">Nucleotidyltransferase</keyword>
<keyword id="KW-1185">Reference proteome</keyword>
<keyword id="KW-0696">RNA-directed RNA polymerase</keyword>
<keyword id="KW-0949">S-adenosyl-L-methionine</keyword>
<keyword id="KW-0808">Transferase</keyword>
<keyword id="KW-0693">Viral RNA replication</keyword>
<keyword id="KW-0946">Virion</keyword>
<evidence type="ECO:0000250" key="1">
    <source>
        <dbReference type="UniProtKB" id="P03523"/>
    </source>
</evidence>
<evidence type="ECO:0000250" key="2">
    <source>
        <dbReference type="UniProtKB" id="P28887"/>
    </source>
</evidence>
<evidence type="ECO:0000255" key="3">
    <source>
        <dbReference type="PROSITE-ProRule" id="PRU00539"/>
    </source>
</evidence>
<evidence type="ECO:0000305" key="4"/>
<protein>
    <recommendedName>
        <fullName>RNA-directed RNA polymerase L</fullName>
        <shortName>Protein L</shortName>
    </recommendedName>
    <alternativeName>
        <fullName>Large structural protein</fullName>
    </alternativeName>
    <alternativeName>
        <fullName>Replicase</fullName>
    </alternativeName>
    <alternativeName>
        <fullName>Transcriptase</fullName>
    </alternativeName>
    <domain>
        <recommendedName>
            <fullName>RNA-directed RNA polymerase</fullName>
            <ecNumber evidence="2">2.7.7.48</ecNumber>
        </recommendedName>
    </domain>
    <domain>
        <recommendedName>
            <fullName evidence="1">GTP phosphohydrolase</fullName>
            <ecNumber evidence="1">3.6.1.-</ecNumber>
        </recommendedName>
    </domain>
    <domain>
        <recommendedName>
            <fullName evidence="4">GDP polyribonucleotidyltransferase</fullName>
            <ecNumber evidence="1">2.7.7.88</ecNumber>
        </recommendedName>
        <alternativeName>
            <fullName evidence="4">PRNTase</fullName>
        </alternativeName>
    </domain>
    <domain>
        <recommendedName>
            <fullName evidence="4">mRNA cap methyltransferase</fullName>
            <ecNumber evidence="1">2.1.1.375</ecNumber>
        </recommendedName>
        <alternativeName>
            <fullName evidence="1">mRNA (guanine-N(7)-)-methyltransferase</fullName>
            <shortName evidence="1">G-N7-MTase</shortName>
        </alternativeName>
        <alternativeName>
            <fullName evidence="1">mRNA (nucleoside-2'-O-)-methyltransferase</fullName>
            <shortName evidence="1">N1-2'-O-MTase</shortName>
        </alternativeName>
    </domain>
</protein>
<proteinExistence type="inferred from homology"/>
<reference key="1">
    <citation type="journal article" date="2005" name="J. Virol. Methods">
        <title>Shotgun sequencing of the negative-sense RNA genome of the rhabdovirus Maize mosaic virus.</title>
        <authorList>
            <person name="Reed S.E."/>
            <person name="Tsai C.W."/>
            <person name="Willie K.J."/>
            <person name="Redinbaugh M.G."/>
            <person name="Hogenhout S.A."/>
        </authorList>
    </citation>
    <scope>NUCLEOTIDE SEQUENCE [GENOMIC RNA]</scope>
</reference>
<organism>
    <name type="scientific">Maize mosaic virus (isolate Maize/United States/Reed/2005)</name>
    <name type="common">MMV</name>
    <dbReference type="NCBI Taxonomy" id="928305"/>
    <lineage>
        <taxon>Viruses</taxon>
        <taxon>Riboviria</taxon>
        <taxon>Orthornavirae</taxon>
        <taxon>Negarnaviricota</taxon>
        <taxon>Haploviricotina</taxon>
        <taxon>Monjiviricetes</taxon>
        <taxon>Mononegavirales</taxon>
        <taxon>Rhabdoviridae</taxon>
        <taxon>Betarhabdovirinae</taxon>
        <taxon>Alphanucleorhabdovirus</taxon>
        <taxon>Alphanucleorhabdovirus maydis</taxon>
    </lineage>
</organism>
<sequence>MDPDYPDLDPESLDVLNSLQEGYDEEEEEDSGVSLNGMGDYHLKSALRSYTDMMKHPIFKKEFSKAVINFGISHDSMMSQIETMFYILKSTPLSMHLGTLYGDLFTRQSTLGHSEDVFDIIQAEIRTLHPHLLLEMTPAKVEEMVLIADRKTYDERAASAFWSTLITIKNYIPAWTEKGACTLDWPSVSLDKKSGYVKVMAGKDTTIYIGTDICVIEKYPTVKWAPLSYLLNGADKVAERLNVRYYSCLCDQLDIPDRITLDMLDEIIKVGDDCLREMGNDGYNVIGSYEALLAGIIQRRDNQGLIPDRDLLWRTTMEEFTSSPGRKYLEEWSTMFSSLSPEQIACAHGLYRIWGHPIVDILGGIKKMQEVASVKKNPRQSVLDEIRRQFKEMFFTSYHRIHKHYPLHTILNSLDNSYILNCLKDNLTINTSAISYNFQDWDCVMVEKNFEVPFSWNLVHNLKDKAISPNRQEIYQTISTRGTIFGSQNRRGILKSLTMETVQLRDFLQGINDNGLDDIDKIIGVYPKERELKIKARLFSLMSFRLRLYCVSTEALLGDKILKYFPQITMSLDMLTMIKKMFKVSSQTTREDDSVTVIFNLDFIKWNLQMRRNICEPVFSQLGKLFGMENLFNRTHETFRDSLIYLCSGEGVLSADPVYGVFPDGTWAWAGDESGKEGLRQKGWTILTVVTIMLIAKRHNVDVSLMGGGDNQVLGITISGVTRDLQGELITESASLARRTIKQFTEDLLTTFSDLGLPLKASETWVSDSLFMYNKHMFYKGIPLRSPLKAISRIFPLANDTIMTIDNMINNISSGVKAACMKERHGIPLVFMKTLAYRKVAEGALILHPLTTCFRTPTLPENGTVTRDGRKRSVKVTRNQLRSFFTLCMVGSSTMGLPGTIHLPDMIMRGFPDPLTSHLSFISELVPKIMDPRLASIIATSGHMSINRMTEYAKLVEDPVSINHDAPTHGLNEIRQLSRDFLMNTTLAANTHLKSLFTLLDRQREKEFYDALCSAEELDVKVLHEVAGASLFGYTNGIASRIDQTRTVRALNETVNVMKRLADAEARYIAYLFARDIHKHDLIPDQCSRVTADRYRYYSWKKKVLGVTVPHPIEMCQVTSATQTAFEDAVICWSDNLSGSRIYTTMGLGKIYQGSYTKERFKATDIAAAYGNEDILTKAVRLQKLINWRYDEGSSFARIIQLALRAITDASTDGFHRXKEEIKGEFDHRRGISGDISGGIPNFLVTPTSHXSCTTSSWISHSRGGKNENIHFQSVLINLLYRAMVYRGSLPGLPEMVWYSKERCSHCIIDIVEPSPERTTPALSEMPSAPNNPFAFIESVNVKLDYHHQVEIEKGMEETNLLNSEWGGSSLTSVDEAGLVLFLMLIGSRQVSESFLLLMREKIEPRPLLQAALNRVILVRKLGLDRLFPIRNTKCINLILGSDRGITACHDGFGLELHGGSWEKGIECDTSFLYNDTHLKPCKLHVNLHLQNVPLQLALAHASYNPDVCECLECRAIIEDRVSKRMVGQYKSWRCQYHAVLSFSPIIMRVHSERIIKSEGAIYEGDLHVPYVEEIIALENSQKLAIDVTSWRLPLLMHATWESILPQLYITMKACLVSLPLEGVIVDDDLALINLVSKVLVDLRRTIQVYIRAGTFSGSEINNKYDNIRLLPEDLRDSIHILTTTDKPDPAATVQLAADDTSPLDCAVYHLIWGDTWGMTRKVHGRILIPSSRVTTGFAGVMVTDYYATVAVLELAGAVNLWEKKLIDLEHRNNLDVPLSMNRVLAGSRLGTRGIRWAQWTSPAGLEIVVRKVRAKLSSISGNPGNAAKWRRNCQKVLKALMISLYAHSGEDMMRNASGLVKVNIHGTLSSVTAVCDPSAESRVQRAQFLFLKEKAPNGPFIXRSRLERRINLLSVVSDLLG</sequence>
<feature type="chain" id="PRO_0000297838" description="RNA-directed RNA polymerase L">
    <location>
        <begin position="1"/>
        <end position="1922"/>
    </location>
</feature>
<feature type="domain" description="RdRp catalytic" evidence="3">
    <location>
        <begin position="595"/>
        <end position="781"/>
    </location>
</feature>
<organismHost>
    <name type="scientific">Rottboellia</name>
    <dbReference type="NCBI Taxonomy" id="300124"/>
</organismHost>
<organismHost>
    <name type="scientific">Setaria</name>
    <dbReference type="NCBI Taxonomy" id="4554"/>
</organismHost>
<organismHost>
    <name type="scientific">Sorghum bicolor</name>
    <name type="common">Sorghum</name>
    <name type="synonym">Sorghum vulgare</name>
    <dbReference type="NCBI Taxonomy" id="4558"/>
</organismHost>
<organismHost>
    <name type="scientific">Zea mays</name>
    <name type="common">Maize</name>
    <dbReference type="NCBI Taxonomy" id="4577"/>
</organismHost>
<dbReference type="EC" id="2.7.7.48" evidence="2"/>
<dbReference type="EC" id="3.6.1.-" evidence="1"/>
<dbReference type="EC" id="2.7.7.88" evidence="1"/>
<dbReference type="EC" id="2.1.1.375" evidence="1"/>
<dbReference type="EMBL" id="AY618418">
    <property type="protein sequence ID" value="AAT66757.1"/>
    <property type="molecule type" value="Genomic_RNA"/>
</dbReference>
<dbReference type="RefSeq" id="YP_052855.1">
    <property type="nucleotide sequence ID" value="NC_005975.1"/>
</dbReference>
<dbReference type="GeneID" id="2886119"/>
<dbReference type="KEGG" id="vg:2886119"/>
<dbReference type="Proteomes" id="UP000008593">
    <property type="component" value="Segment"/>
</dbReference>
<dbReference type="GO" id="GO:0030430">
    <property type="term" value="C:host cell cytoplasm"/>
    <property type="evidence" value="ECO:0007669"/>
    <property type="project" value="UniProtKB-SubCell"/>
</dbReference>
<dbReference type="GO" id="GO:0044423">
    <property type="term" value="C:virion component"/>
    <property type="evidence" value="ECO:0007669"/>
    <property type="project" value="UniProtKB-KW"/>
</dbReference>
<dbReference type="GO" id="GO:0005524">
    <property type="term" value="F:ATP binding"/>
    <property type="evidence" value="ECO:0007669"/>
    <property type="project" value="UniProtKB-KW"/>
</dbReference>
<dbReference type="GO" id="GO:0003924">
    <property type="term" value="F:GTPase activity"/>
    <property type="evidence" value="ECO:0007669"/>
    <property type="project" value="RHEA"/>
</dbReference>
<dbReference type="GO" id="GO:0004482">
    <property type="term" value="F:mRNA 5'-cap (guanine-N7-)-methyltransferase activity"/>
    <property type="evidence" value="ECO:0007669"/>
    <property type="project" value="InterPro"/>
</dbReference>
<dbReference type="GO" id="GO:0003968">
    <property type="term" value="F:RNA-directed RNA polymerase activity"/>
    <property type="evidence" value="ECO:0007669"/>
    <property type="project" value="UniProtKB-KW"/>
</dbReference>
<dbReference type="InterPro" id="IPR026890">
    <property type="entry name" value="Mononeg_mRNAcap"/>
</dbReference>
<dbReference type="InterPro" id="IPR014023">
    <property type="entry name" value="Mononeg_RNA_pol_cat"/>
</dbReference>
<dbReference type="Pfam" id="PF14318">
    <property type="entry name" value="Mononeg_mRNAcap"/>
    <property type="match status" value="1"/>
</dbReference>
<dbReference type="Pfam" id="PF00946">
    <property type="entry name" value="Mononeg_RNA_pol"/>
    <property type="match status" value="1"/>
</dbReference>
<dbReference type="PROSITE" id="PS50526">
    <property type="entry name" value="RDRP_SSRNA_NEG_NONSEG"/>
    <property type="match status" value="1"/>
</dbReference>